<organism>
    <name type="scientific">Thiobacillus denitrificans (strain ATCC 25259 / T1)</name>
    <dbReference type="NCBI Taxonomy" id="292415"/>
    <lineage>
        <taxon>Bacteria</taxon>
        <taxon>Pseudomonadati</taxon>
        <taxon>Pseudomonadota</taxon>
        <taxon>Betaproteobacteria</taxon>
        <taxon>Nitrosomonadales</taxon>
        <taxon>Thiobacillaceae</taxon>
        <taxon>Thiobacillus</taxon>
    </lineage>
</organism>
<accession>Q3SKD9</accession>
<dbReference type="EC" id="6.1.1.6" evidence="1"/>
<dbReference type="EMBL" id="CP000116">
    <property type="protein sequence ID" value="AAZ96846.1"/>
    <property type="molecule type" value="Genomic_DNA"/>
</dbReference>
<dbReference type="RefSeq" id="WP_011311405.1">
    <property type="nucleotide sequence ID" value="NC_007404.1"/>
</dbReference>
<dbReference type="SMR" id="Q3SKD9"/>
<dbReference type="STRING" id="292415.Tbd_0893"/>
<dbReference type="KEGG" id="tbd:Tbd_0893"/>
<dbReference type="eggNOG" id="COG1190">
    <property type="taxonomic scope" value="Bacteria"/>
</dbReference>
<dbReference type="HOGENOM" id="CLU_008255_6_0_4"/>
<dbReference type="OrthoDB" id="9802326at2"/>
<dbReference type="Proteomes" id="UP000008291">
    <property type="component" value="Chromosome"/>
</dbReference>
<dbReference type="GO" id="GO:0005829">
    <property type="term" value="C:cytosol"/>
    <property type="evidence" value="ECO:0007669"/>
    <property type="project" value="TreeGrafter"/>
</dbReference>
<dbReference type="GO" id="GO:0005524">
    <property type="term" value="F:ATP binding"/>
    <property type="evidence" value="ECO:0007669"/>
    <property type="project" value="UniProtKB-UniRule"/>
</dbReference>
<dbReference type="GO" id="GO:0004824">
    <property type="term" value="F:lysine-tRNA ligase activity"/>
    <property type="evidence" value="ECO:0007669"/>
    <property type="project" value="UniProtKB-UniRule"/>
</dbReference>
<dbReference type="GO" id="GO:0000287">
    <property type="term" value="F:magnesium ion binding"/>
    <property type="evidence" value="ECO:0007669"/>
    <property type="project" value="UniProtKB-UniRule"/>
</dbReference>
<dbReference type="GO" id="GO:0000049">
    <property type="term" value="F:tRNA binding"/>
    <property type="evidence" value="ECO:0007669"/>
    <property type="project" value="TreeGrafter"/>
</dbReference>
<dbReference type="GO" id="GO:0006430">
    <property type="term" value="P:lysyl-tRNA aminoacylation"/>
    <property type="evidence" value="ECO:0007669"/>
    <property type="project" value="UniProtKB-UniRule"/>
</dbReference>
<dbReference type="CDD" id="cd00775">
    <property type="entry name" value="LysRS_core"/>
    <property type="match status" value="1"/>
</dbReference>
<dbReference type="CDD" id="cd04322">
    <property type="entry name" value="LysRS_N"/>
    <property type="match status" value="1"/>
</dbReference>
<dbReference type="FunFam" id="2.40.50.140:FF:000024">
    <property type="entry name" value="Lysine--tRNA ligase"/>
    <property type="match status" value="1"/>
</dbReference>
<dbReference type="FunFam" id="3.30.930.10:FF:000001">
    <property type="entry name" value="Lysine--tRNA ligase"/>
    <property type="match status" value="1"/>
</dbReference>
<dbReference type="Gene3D" id="3.30.930.10">
    <property type="entry name" value="Bira Bifunctional Protein, Domain 2"/>
    <property type="match status" value="1"/>
</dbReference>
<dbReference type="Gene3D" id="2.40.50.140">
    <property type="entry name" value="Nucleic acid-binding proteins"/>
    <property type="match status" value="1"/>
</dbReference>
<dbReference type="HAMAP" id="MF_00252">
    <property type="entry name" value="Lys_tRNA_synth_class2"/>
    <property type="match status" value="1"/>
</dbReference>
<dbReference type="InterPro" id="IPR004364">
    <property type="entry name" value="Aa-tRNA-synt_II"/>
</dbReference>
<dbReference type="InterPro" id="IPR006195">
    <property type="entry name" value="aa-tRNA-synth_II"/>
</dbReference>
<dbReference type="InterPro" id="IPR045864">
    <property type="entry name" value="aa-tRNA-synth_II/BPL/LPL"/>
</dbReference>
<dbReference type="InterPro" id="IPR002313">
    <property type="entry name" value="Lys-tRNA-ligase_II"/>
</dbReference>
<dbReference type="InterPro" id="IPR044136">
    <property type="entry name" value="Lys-tRNA-ligase_II_N"/>
</dbReference>
<dbReference type="InterPro" id="IPR018149">
    <property type="entry name" value="Lys-tRNA-synth_II_C"/>
</dbReference>
<dbReference type="InterPro" id="IPR012340">
    <property type="entry name" value="NA-bd_OB-fold"/>
</dbReference>
<dbReference type="InterPro" id="IPR004365">
    <property type="entry name" value="NA-bd_OB_tRNA"/>
</dbReference>
<dbReference type="NCBIfam" id="TIGR00499">
    <property type="entry name" value="lysS_bact"/>
    <property type="match status" value="1"/>
</dbReference>
<dbReference type="NCBIfam" id="NF001756">
    <property type="entry name" value="PRK00484.1"/>
    <property type="match status" value="1"/>
</dbReference>
<dbReference type="PANTHER" id="PTHR42918:SF15">
    <property type="entry name" value="LYSINE--TRNA LIGASE, CHLOROPLASTIC_MITOCHONDRIAL"/>
    <property type="match status" value="1"/>
</dbReference>
<dbReference type="PANTHER" id="PTHR42918">
    <property type="entry name" value="LYSYL-TRNA SYNTHETASE"/>
    <property type="match status" value="1"/>
</dbReference>
<dbReference type="Pfam" id="PF00152">
    <property type="entry name" value="tRNA-synt_2"/>
    <property type="match status" value="1"/>
</dbReference>
<dbReference type="Pfam" id="PF01336">
    <property type="entry name" value="tRNA_anti-codon"/>
    <property type="match status" value="1"/>
</dbReference>
<dbReference type="PRINTS" id="PR00982">
    <property type="entry name" value="TRNASYNTHLYS"/>
</dbReference>
<dbReference type="SUPFAM" id="SSF55681">
    <property type="entry name" value="Class II aaRS and biotin synthetases"/>
    <property type="match status" value="1"/>
</dbReference>
<dbReference type="SUPFAM" id="SSF50249">
    <property type="entry name" value="Nucleic acid-binding proteins"/>
    <property type="match status" value="1"/>
</dbReference>
<dbReference type="PROSITE" id="PS50862">
    <property type="entry name" value="AA_TRNA_LIGASE_II"/>
    <property type="match status" value="1"/>
</dbReference>
<keyword id="KW-0030">Aminoacyl-tRNA synthetase</keyword>
<keyword id="KW-0067">ATP-binding</keyword>
<keyword id="KW-0963">Cytoplasm</keyword>
<keyword id="KW-0436">Ligase</keyword>
<keyword id="KW-0460">Magnesium</keyword>
<keyword id="KW-0479">Metal-binding</keyword>
<keyword id="KW-0547">Nucleotide-binding</keyword>
<keyword id="KW-0648">Protein biosynthesis</keyword>
<keyword id="KW-1185">Reference proteome</keyword>
<reference key="1">
    <citation type="journal article" date="2006" name="J. Bacteriol.">
        <title>The genome sequence of the obligately chemolithoautotrophic, facultatively anaerobic bacterium Thiobacillus denitrificans.</title>
        <authorList>
            <person name="Beller H.R."/>
            <person name="Chain P.S."/>
            <person name="Letain T.E."/>
            <person name="Chakicherla A."/>
            <person name="Larimer F.W."/>
            <person name="Richardson P.M."/>
            <person name="Coleman M.A."/>
            <person name="Wood A.P."/>
            <person name="Kelly D.P."/>
        </authorList>
    </citation>
    <scope>NUCLEOTIDE SEQUENCE [LARGE SCALE GENOMIC DNA]</scope>
    <source>
        <strain>ATCC 25259 / T1</strain>
    </source>
</reference>
<sequence>MTDPTNAPALDENQIIAERRAKLAAIREAGVAFPNDFERRDYAGRLAHEHGDKSKEALEAEAVDVQLAGRMMLKRVMGKASFATLQDMSGRIQVYVSNDLTGLDAHEAFKRWDLGDFVGVSGTLFKTNKGELTIQAKSVRLLSKALRPLPEKFHGLADQEQKYRQRYLDLITNDDARSTFVRRSKIIQAIREFMTGHGFLEVETPMMHPIPGGAAAKPFVTHHNALDMELFLRIAPELYLKRLVVGGFEKVFEINRNFRNEGLSTRHNPEFTMMEFYEAYREYRYLMDFTEALIRHTAVAATGSTTISYQGSTIELGTPFDRLTIVEAVRKYHPEYTVEQLNDRDWLTAQFTAMKAKYREHDGLGGLQLTFFEETTEALLVQPTFIVDYPAEVSPLARRSDTQPEITERFELFITGREMANGFSELNDAEDQAERFMEQVRAKEAGDEEAMHYDADFIRALEHGLPPTGGCGIGIDRLVMLLTDSPSIRDVILFPQMRREA</sequence>
<evidence type="ECO:0000255" key="1">
    <source>
        <dbReference type="HAMAP-Rule" id="MF_00252"/>
    </source>
</evidence>
<proteinExistence type="inferred from homology"/>
<protein>
    <recommendedName>
        <fullName evidence="1">Lysine--tRNA ligase</fullName>
        <ecNumber evidence="1">6.1.1.6</ecNumber>
    </recommendedName>
    <alternativeName>
        <fullName evidence="1">Lysyl-tRNA synthetase</fullName>
        <shortName evidence="1">LysRS</shortName>
    </alternativeName>
</protein>
<feature type="chain" id="PRO_1000199251" description="Lysine--tRNA ligase">
    <location>
        <begin position="1"/>
        <end position="501"/>
    </location>
</feature>
<feature type="binding site" evidence="1">
    <location>
        <position position="411"/>
    </location>
    <ligand>
        <name>Mg(2+)</name>
        <dbReference type="ChEBI" id="CHEBI:18420"/>
        <label>1</label>
    </ligand>
</feature>
<feature type="binding site" evidence="1">
    <location>
        <position position="418"/>
    </location>
    <ligand>
        <name>Mg(2+)</name>
        <dbReference type="ChEBI" id="CHEBI:18420"/>
        <label>1</label>
    </ligand>
</feature>
<feature type="binding site" evidence="1">
    <location>
        <position position="418"/>
    </location>
    <ligand>
        <name>Mg(2+)</name>
        <dbReference type="ChEBI" id="CHEBI:18420"/>
        <label>2</label>
    </ligand>
</feature>
<name>SYK_THIDA</name>
<gene>
    <name evidence="1" type="primary">lysS</name>
    <name type="ordered locus">Tbd_0893</name>
</gene>
<comment type="catalytic activity">
    <reaction evidence="1">
        <text>tRNA(Lys) + L-lysine + ATP = L-lysyl-tRNA(Lys) + AMP + diphosphate</text>
        <dbReference type="Rhea" id="RHEA:20792"/>
        <dbReference type="Rhea" id="RHEA-COMP:9696"/>
        <dbReference type="Rhea" id="RHEA-COMP:9697"/>
        <dbReference type="ChEBI" id="CHEBI:30616"/>
        <dbReference type="ChEBI" id="CHEBI:32551"/>
        <dbReference type="ChEBI" id="CHEBI:33019"/>
        <dbReference type="ChEBI" id="CHEBI:78442"/>
        <dbReference type="ChEBI" id="CHEBI:78529"/>
        <dbReference type="ChEBI" id="CHEBI:456215"/>
        <dbReference type="EC" id="6.1.1.6"/>
    </reaction>
</comment>
<comment type="cofactor">
    <cofactor evidence="1">
        <name>Mg(2+)</name>
        <dbReference type="ChEBI" id="CHEBI:18420"/>
    </cofactor>
    <text evidence="1">Binds 3 Mg(2+) ions per subunit.</text>
</comment>
<comment type="subunit">
    <text evidence="1">Homodimer.</text>
</comment>
<comment type="subcellular location">
    <subcellularLocation>
        <location evidence="1">Cytoplasm</location>
    </subcellularLocation>
</comment>
<comment type="similarity">
    <text evidence="1">Belongs to the class-II aminoacyl-tRNA synthetase family.</text>
</comment>